<accession>B0T658</accession>
<protein>
    <recommendedName>
        <fullName evidence="1">Protease HtpX homolog</fullName>
        <ecNumber evidence="1">3.4.24.-</ecNumber>
    </recommendedName>
</protein>
<dbReference type="EC" id="3.4.24.-" evidence="1"/>
<dbReference type="EMBL" id="CP000927">
    <property type="protein sequence ID" value="ABZ72639.1"/>
    <property type="molecule type" value="Genomic_DNA"/>
</dbReference>
<dbReference type="SMR" id="B0T658"/>
<dbReference type="STRING" id="366602.Caul_3512"/>
<dbReference type="KEGG" id="cak:Caul_3512"/>
<dbReference type="eggNOG" id="COG0501">
    <property type="taxonomic scope" value="Bacteria"/>
</dbReference>
<dbReference type="HOGENOM" id="CLU_042266_3_0_5"/>
<dbReference type="OrthoDB" id="15218at2"/>
<dbReference type="GO" id="GO:0005886">
    <property type="term" value="C:plasma membrane"/>
    <property type="evidence" value="ECO:0007669"/>
    <property type="project" value="UniProtKB-SubCell"/>
</dbReference>
<dbReference type="GO" id="GO:0004222">
    <property type="term" value="F:metalloendopeptidase activity"/>
    <property type="evidence" value="ECO:0007669"/>
    <property type="project" value="UniProtKB-UniRule"/>
</dbReference>
<dbReference type="GO" id="GO:0008270">
    <property type="term" value="F:zinc ion binding"/>
    <property type="evidence" value="ECO:0007669"/>
    <property type="project" value="UniProtKB-UniRule"/>
</dbReference>
<dbReference type="GO" id="GO:0006508">
    <property type="term" value="P:proteolysis"/>
    <property type="evidence" value="ECO:0007669"/>
    <property type="project" value="UniProtKB-KW"/>
</dbReference>
<dbReference type="CDD" id="cd07336">
    <property type="entry name" value="M48B_HtpX_like"/>
    <property type="match status" value="1"/>
</dbReference>
<dbReference type="Gene3D" id="3.30.2010.10">
    <property type="entry name" value="Metalloproteases ('zincins'), catalytic domain"/>
    <property type="match status" value="1"/>
</dbReference>
<dbReference type="HAMAP" id="MF_00188">
    <property type="entry name" value="Pept_M48_protease_HtpX"/>
    <property type="match status" value="1"/>
</dbReference>
<dbReference type="InterPro" id="IPR050083">
    <property type="entry name" value="HtpX_protease"/>
</dbReference>
<dbReference type="InterPro" id="IPR022919">
    <property type="entry name" value="Pept_M48_protease_HtpX"/>
</dbReference>
<dbReference type="InterPro" id="IPR001915">
    <property type="entry name" value="Peptidase_M48"/>
</dbReference>
<dbReference type="NCBIfam" id="NF002363">
    <property type="entry name" value="PRK01345.1"/>
    <property type="match status" value="1"/>
</dbReference>
<dbReference type="NCBIfam" id="NF002826">
    <property type="entry name" value="PRK03001.1"/>
    <property type="match status" value="1"/>
</dbReference>
<dbReference type="PANTHER" id="PTHR43221">
    <property type="entry name" value="PROTEASE HTPX"/>
    <property type="match status" value="1"/>
</dbReference>
<dbReference type="PANTHER" id="PTHR43221:SF1">
    <property type="entry name" value="PROTEASE HTPX"/>
    <property type="match status" value="1"/>
</dbReference>
<dbReference type="Pfam" id="PF01435">
    <property type="entry name" value="Peptidase_M48"/>
    <property type="match status" value="1"/>
</dbReference>
<feature type="chain" id="PRO_1000077462" description="Protease HtpX homolog">
    <location>
        <begin position="1"/>
        <end position="309"/>
    </location>
</feature>
<feature type="transmembrane region" description="Helical" evidence="1">
    <location>
        <begin position="7"/>
        <end position="27"/>
    </location>
</feature>
<feature type="transmembrane region" description="Helical" evidence="1">
    <location>
        <begin position="28"/>
        <end position="48"/>
    </location>
</feature>
<feature type="transmembrane region" description="Helical" evidence="1">
    <location>
        <begin position="149"/>
        <end position="169"/>
    </location>
</feature>
<feature type="transmembrane region" description="Helical" evidence="1">
    <location>
        <begin position="177"/>
        <end position="197"/>
    </location>
</feature>
<feature type="region of interest" description="Disordered" evidence="2">
    <location>
        <begin position="289"/>
        <end position="309"/>
    </location>
</feature>
<feature type="active site" evidence="1">
    <location>
        <position position="135"/>
    </location>
</feature>
<feature type="binding site" evidence="1">
    <location>
        <position position="134"/>
    </location>
    <ligand>
        <name>Zn(2+)</name>
        <dbReference type="ChEBI" id="CHEBI:29105"/>
        <note>catalytic</note>
    </ligand>
</feature>
<feature type="binding site" evidence="1">
    <location>
        <position position="138"/>
    </location>
    <ligand>
        <name>Zn(2+)</name>
        <dbReference type="ChEBI" id="CHEBI:29105"/>
        <note>catalytic</note>
    </ligand>
</feature>
<feature type="binding site" evidence="1">
    <location>
        <position position="206"/>
    </location>
    <ligand>
        <name>Zn(2+)</name>
        <dbReference type="ChEBI" id="CHEBI:29105"/>
        <note>catalytic</note>
    </ligand>
</feature>
<keyword id="KW-0997">Cell inner membrane</keyword>
<keyword id="KW-1003">Cell membrane</keyword>
<keyword id="KW-0378">Hydrolase</keyword>
<keyword id="KW-0472">Membrane</keyword>
<keyword id="KW-0479">Metal-binding</keyword>
<keyword id="KW-0482">Metalloprotease</keyword>
<keyword id="KW-0645">Protease</keyword>
<keyword id="KW-0812">Transmembrane</keyword>
<keyword id="KW-1133">Transmembrane helix</keyword>
<keyword id="KW-0862">Zinc</keyword>
<comment type="cofactor">
    <cofactor evidence="1">
        <name>Zn(2+)</name>
        <dbReference type="ChEBI" id="CHEBI:29105"/>
    </cofactor>
    <text evidence="1">Binds 1 zinc ion per subunit.</text>
</comment>
<comment type="subcellular location">
    <subcellularLocation>
        <location evidence="1">Cell inner membrane</location>
        <topology evidence="1">Multi-pass membrane protein</topology>
    </subcellularLocation>
</comment>
<comment type="similarity">
    <text evidence="1">Belongs to the peptidase M48B family.</text>
</comment>
<sequence length="309" mass="32576">MNHLKTFILLAGLTALFVGAGYMIGGPTGMLVALVLAVGMNLFSYWNADKIVLRMYGAVEVDASHPEPRVRAYVADVEDLARRAGLPRPRITVIDSQQPNAFATGRDPDHAAVAASTGLLGLLDRDEIRGVMAHELAHVKNRDTLTMTVTATIAGAISALANFAFFFGGSRDDDERPGGLVGTIALAILAPIAAMLVQMAISRSREYEADRIGAQIAGDGLALARALEKIEAYARGGAVNVEAERNPATAHLFIINPLSGRGRDSLFSTHPATRNRVEALLRLGVSQATRGRSGTAVPTGATGKSGPWG</sequence>
<gene>
    <name evidence="1" type="primary">htpX</name>
    <name type="ordered locus">Caul_3512</name>
</gene>
<organism>
    <name type="scientific">Caulobacter sp. (strain K31)</name>
    <dbReference type="NCBI Taxonomy" id="366602"/>
    <lineage>
        <taxon>Bacteria</taxon>
        <taxon>Pseudomonadati</taxon>
        <taxon>Pseudomonadota</taxon>
        <taxon>Alphaproteobacteria</taxon>
        <taxon>Caulobacterales</taxon>
        <taxon>Caulobacteraceae</taxon>
        <taxon>Caulobacter</taxon>
    </lineage>
</organism>
<proteinExistence type="inferred from homology"/>
<reference key="1">
    <citation type="submission" date="2008-01" db="EMBL/GenBank/DDBJ databases">
        <title>Complete sequence of chromosome of Caulobacter sp. K31.</title>
        <authorList>
            <consortium name="US DOE Joint Genome Institute"/>
            <person name="Copeland A."/>
            <person name="Lucas S."/>
            <person name="Lapidus A."/>
            <person name="Barry K."/>
            <person name="Glavina del Rio T."/>
            <person name="Dalin E."/>
            <person name="Tice H."/>
            <person name="Pitluck S."/>
            <person name="Bruce D."/>
            <person name="Goodwin L."/>
            <person name="Thompson L.S."/>
            <person name="Brettin T."/>
            <person name="Detter J.C."/>
            <person name="Han C."/>
            <person name="Schmutz J."/>
            <person name="Larimer F."/>
            <person name="Land M."/>
            <person name="Hauser L."/>
            <person name="Kyrpides N."/>
            <person name="Kim E."/>
            <person name="Stephens C."/>
            <person name="Richardson P."/>
        </authorList>
    </citation>
    <scope>NUCLEOTIDE SEQUENCE [LARGE SCALE GENOMIC DNA]</scope>
    <source>
        <strain>K31</strain>
    </source>
</reference>
<evidence type="ECO:0000255" key="1">
    <source>
        <dbReference type="HAMAP-Rule" id="MF_00188"/>
    </source>
</evidence>
<evidence type="ECO:0000256" key="2">
    <source>
        <dbReference type="SAM" id="MobiDB-lite"/>
    </source>
</evidence>
<name>HTPX_CAUSK</name>